<feature type="chain" id="PRO_0000141077" description="Ribose-phosphate pyrophosphokinase 2">
    <location>
        <begin position="1"/>
        <end position="318"/>
    </location>
</feature>
<feature type="region of interest" description="Binding of phosphoribosylpyrophosphate" evidence="2">
    <location>
        <begin position="212"/>
        <end position="227"/>
    </location>
</feature>
<feature type="binding site" evidence="1">
    <location>
        <begin position="96"/>
        <end position="101"/>
    </location>
    <ligand>
        <name>ATP</name>
        <dbReference type="ChEBI" id="CHEBI:30616"/>
    </ligand>
</feature>
<feature type="binding site" evidence="2">
    <location>
        <position position="128"/>
    </location>
    <ligand>
        <name>Mg(2+)</name>
        <dbReference type="ChEBI" id="CHEBI:18420"/>
    </ligand>
</feature>
<feature type="binding site" evidence="1">
    <location>
        <position position="130"/>
    </location>
    <ligand>
        <name>ATP</name>
        <dbReference type="ChEBI" id="CHEBI:30616"/>
    </ligand>
</feature>
<feature type="binding site" evidence="2">
    <location>
        <position position="130"/>
    </location>
    <ligand>
        <name>Mg(2+)</name>
        <dbReference type="ChEBI" id="CHEBI:18420"/>
    </ligand>
</feature>
<feature type="binding site" evidence="2">
    <location>
        <position position="139"/>
    </location>
    <ligand>
        <name>Mg(2+)</name>
        <dbReference type="ChEBI" id="CHEBI:18420"/>
    </ligand>
</feature>
<feature type="binding site" evidence="2">
    <location>
        <position position="143"/>
    </location>
    <ligand>
        <name>Mg(2+)</name>
        <dbReference type="ChEBI" id="CHEBI:18420"/>
    </ligand>
</feature>
<feature type="sequence conflict" description="In Ref. 1; AAA41961." evidence="3" ref="1">
    <original>K</original>
    <variation>N</variation>
    <location>
        <position position="235"/>
    </location>
</feature>
<dbReference type="EC" id="2.7.6.1"/>
<dbReference type="EMBL" id="M17259">
    <property type="protein sequence ID" value="AAA41964.1"/>
    <property type="molecule type" value="mRNA"/>
</dbReference>
<dbReference type="EMBL" id="M29393">
    <property type="protein sequence ID" value="AAA41961.1"/>
    <property type="molecule type" value="mRNA"/>
</dbReference>
<dbReference type="EMBL" id="X16555">
    <property type="protein sequence ID" value="CAA34556.1"/>
    <property type="molecule type" value="mRNA"/>
</dbReference>
<dbReference type="PIR" id="B29463">
    <property type="entry name" value="KIRTR2"/>
</dbReference>
<dbReference type="RefSeq" id="NP_036766.1">
    <property type="nucleotide sequence ID" value="NM_012634.2"/>
</dbReference>
<dbReference type="SMR" id="P09330"/>
<dbReference type="BioGRID" id="246821">
    <property type="interactions" value="2"/>
</dbReference>
<dbReference type="FunCoup" id="P09330">
    <property type="interactions" value="1300"/>
</dbReference>
<dbReference type="IntAct" id="P09330">
    <property type="interactions" value="1"/>
</dbReference>
<dbReference type="STRING" id="10116.ENSRNOP00000005615"/>
<dbReference type="PhosphoSitePlus" id="P09330"/>
<dbReference type="jPOST" id="P09330"/>
<dbReference type="PaxDb" id="10116-ENSRNOP00000005615"/>
<dbReference type="GeneID" id="24689"/>
<dbReference type="KEGG" id="rno:24689"/>
<dbReference type="AGR" id="RGD:3415"/>
<dbReference type="CTD" id="5634"/>
<dbReference type="RGD" id="3415">
    <property type="gene designation" value="Prps2"/>
</dbReference>
<dbReference type="VEuPathDB" id="HostDB:ENSRNOG00000004160"/>
<dbReference type="eggNOG" id="KOG1448">
    <property type="taxonomic scope" value="Eukaryota"/>
</dbReference>
<dbReference type="HOGENOM" id="CLU_033546_4_0_1"/>
<dbReference type="InParanoid" id="P09330"/>
<dbReference type="OrthoDB" id="413572at2759"/>
<dbReference type="PhylomeDB" id="P09330"/>
<dbReference type="TreeFam" id="TF106366"/>
<dbReference type="Reactome" id="R-RNO-73843">
    <property type="pathway name" value="5-Phosphoribose 1-diphosphate biosynthesis"/>
</dbReference>
<dbReference type="SABIO-RK" id="P09330"/>
<dbReference type="UniPathway" id="UPA00087">
    <property type="reaction ID" value="UER00172"/>
</dbReference>
<dbReference type="PRO" id="PR:P09330"/>
<dbReference type="Proteomes" id="UP000002494">
    <property type="component" value="Chromosome X"/>
</dbReference>
<dbReference type="Bgee" id="ENSRNOG00000004160">
    <property type="expression patterns" value="Expressed in ovary and 20 other cell types or tissues"/>
</dbReference>
<dbReference type="GO" id="GO:0005737">
    <property type="term" value="C:cytoplasm"/>
    <property type="evidence" value="ECO:0000318"/>
    <property type="project" value="GO_Central"/>
</dbReference>
<dbReference type="GO" id="GO:0005829">
    <property type="term" value="C:cytosol"/>
    <property type="evidence" value="ECO:0000266"/>
    <property type="project" value="RGD"/>
</dbReference>
<dbReference type="GO" id="GO:0032991">
    <property type="term" value="C:protein-containing complex"/>
    <property type="evidence" value="ECO:0000314"/>
    <property type="project" value="RGD"/>
</dbReference>
<dbReference type="GO" id="GO:0002189">
    <property type="term" value="C:ribose phosphate diphosphokinase complex"/>
    <property type="evidence" value="ECO:0000314"/>
    <property type="project" value="RGD"/>
</dbReference>
<dbReference type="GO" id="GO:0043531">
    <property type="term" value="F:ADP binding"/>
    <property type="evidence" value="ECO:0000314"/>
    <property type="project" value="RGD"/>
</dbReference>
<dbReference type="GO" id="GO:0016208">
    <property type="term" value="F:AMP binding"/>
    <property type="evidence" value="ECO:0000314"/>
    <property type="project" value="RGD"/>
</dbReference>
<dbReference type="GO" id="GO:0005524">
    <property type="term" value="F:ATP binding"/>
    <property type="evidence" value="ECO:0000314"/>
    <property type="project" value="RGD"/>
</dbReference>
<dbReference type="GO" id="GO:0030246">
    <property type="term" value="F:carbohydrate binding"/>
    <property type="evidence" value="ECO:0000314"/>
    <property type="project" value="RGD"/>
</dbReference>
<dbReference type="GO" id="GO:0019003">
    <property type="term" value="F:GDP binding"/>
    <property type="evidence" value="ECO:0000314"/>
    <property type="project" value="RGD"/>
</dbReference>
<dbReference type="GO" id="GO:0042802">
    <property type="term" value="F:identical protein binding"/>
    <property type="evidence" value="ECO:0000266"/>
    <property type="project" value="RGD"/>
</dbReference>
<dbReference type="GO" id="GO:0016301">
    <property type="term" value="F:kinase activity"/>
    <property type="evidence" value="ECO:0007669"/>
    <property type="project" value="UniProtKB-KW"/>
</dbReference>
<dbReference type="GO" id="GO:0000287">
    <property type="term" value="F:magnesium ion binding"/>
    <property type="evidence" value="ECO:0000314"/>
    <property type="project" value="RGD"/>
</dbReference>
<dbReference type="GO" id="GO:0042803">
    <property type="term" value="F:protein homodimerization activity"/>
    <property type="evidence" value="ECO:0000250"/>
    <property type="project" value="UniProtKB"/>
</dbReference>
<dbReference type="GO" id="GO:0004749">
    <property type="term" value="F:ribose phosphate diphosphokinase activity"/>
    <property type="evidence" value="ECO:0000314"/>
    <property type="project" value="RGD"/>
</dbReference>
<dbReference type="GO" id="GO:0006015">
    <property type="term" value="P:5-phosphoribose 1-diphosphate biosynthetic process"/>
    <property type="evidence" value="ECO:0000314"/>
    <property type="project" value="RGD"/>
</dbReference>
<dbReference type="GO" id="GO:0006167">
    <property type="term" value="P:AMP biosynthetic process"/>
    <property type="evidence" value="ECO:0000314"/>
    <property type="project" value="RGD"/>
</dbReference>
<dbReference type="GO" id="GO:0031100">
    <property type="term" value="P:animal organ regeneration"/>
    <property type="evidence" value="ECO:0000270"/>
    <property type="project" value="RGD"/>
</dbReference>
<dbReference type="GO" id="GO:0006098">
    <property type="term" value="P:pentose-phosphate shunt"/>
    <property type="evidence" value="ECO:0000266"/>
    <property type="project" value="RGD"/>
</dbReference>
<dbReference type="GO" id="GO:0006164">
    <property type="term" value="P:purine nucleotide biosynthetic process"/>
    <property type="evidence" value="ECO:0000318"/>
    <property type="project" value="GO_Central"/>
</dbReference>
<dbReference type="CDD" id="cd06223">
    <property type="entry name" value="PRTases_typeI"/>
    <property type="match status" value="1"/>
</dbReference>
<dbReference type="FunFam" id="3.40.50.2020:FF:000031">
    <property type="entry name" value="Probable PRS4-ribose-phosphate pyrophosphokinase 3"/>
    <property type="match status" value="1"/>
</dbReference>
<dbReference type="FunFam" id="3.40.50.2020:FF:000005">
    <property type="entry name" value="Ribose-phosphate pyrophosphokinase 1"/>
    <property type="match status" value="1"/>
</dbReference>
<dbReference type="Gene3D" id="3.40.50.2020">
    <property type="match status" value="2"/>
</dbReference>
<dbReference type="HAMAP" id="MF_00583_B">
    <property type="entry name" value="RibP_PPkinase_B"/>
    <property type="match status" value="1"/>
</dbReference>
<dbReference type="InterPro" id="IPR000842">
    <property type="entry name" value="PRib_PP_synth_CS"/>
</dbReference>
<dbReference type="InterPro" id="IPR029099">
    <property type="entry name" value="Pribosyltran_N"/>
</dbReference>
<dbReference type="InterPro" id="IPR000836">
    <property type="entry name" value="PRibTrfase_dom"/>
</dbReference>
<dbReference type="InterPro" id="IPR029057">
    <property type="entry name" value="PRTase-like"/>
</dbReference>
<dbReference type="InterPro" id="IPR005946">
    <property type="entry name" value="Rib-P_diPkinase"/>
</dbReference>
<dbReference type="InterPro" id="IPR037515">
    <property type="entry name" value="Rib-P_diPkinase_bac"/>
</dbReference>
<dbReference type="NCBIfam" id="NF002320">
    <property type="entry name" value="PRK01259.1"/>
    <property type="match status" value="1"/>
</dbReference>
<dbReference type="NCBIfam" id="TIGR01251">
    <property type="entry name" value="ribP_PPkin"/>
    <property type="match status" value="1"/>
</dbReference>
<dbReference type="PANTHER" id="PTHR10210">
    <property type="entry name" value="RIBOSE-PHOSPHATE DIPHOSPHOKINASE FAMILY MEMBER"/>
    <property type="match status" value="1"/>
</dbReference>
<dbReference type="PANTHER" id="PTHR10210:SF32">
    <property type="entry name" value="RIBOSE-PHOSPHATE PYROPHOSPHOKINASE 2"/>
    <property type="match status" value="1"/>
</dbReference>
<dbReference type="Pfam" id="PF14572">
    <property type="entry name" value="Pribosyl_synth"/>
    <property type="match status" value="1"/>
</dbReference>
<dbReference type="Pfam" id="PF13793">
    <property type="entry name" value="Pribosyltran_N"/>
    <property type="match status" value="1"/>
</dbReference>
<dbReference type="SMART" id="SM01400">
    <property type="entry name" value="Pribosyltran_N"/>
    <property type="match status" value="1"/>
</dbReference>
<dbReference type="SUPFAM" id="SSF53271">
    <property type="entry name" value="PRTase-like"/>
    <property type="match status" value="1"/>
</dbReference>
<dbReference type="PROSITE" id="PS00114">
    <property type="entry name" value="PRPP_SYNTHASE"/>
    <property type="match status" value="1"/>
</dbReference>
<sequence length="318" mass="34813">MPNIVLFSGSSHQDLSQRVADRLGLELGKVVTKKFSNQETSVEIGESVRGEDVYIIQSGCGEINDNLMELLIMINACKIASSSRVTAVIPCFPYARQDKKDKSRAPISAKLVANMLSVAGADHIITMDLHASQIQGFFDIPVDNLYAEPAVLQWIRENITEWRNCIIVSPDAGGAKRVTSIADRLNVEFALIHKERKKANEVDRMVLVGDVKDRVAILVDDMADTCGTICHAADKLLSAGATKVYAILTHGIFSGPAISRINNAAFEAVVVTNTIPQEDKMKHCSKIQVIDISMILAEAIRRTHNGESVSYLFSHVPL</sequence>
<accession>P09330</accession>
<accession>Q63462</accession>
<name>PRPS2_RAT</name>
<gene>
    <name type="primary">Prps2</name>
</gene>
<reference key="1">
    <citation type="journal article" date="1987" name="J. Biol. Chem.">
        <title>Nucleotide and deduced amino acid sequences of two distinct cDNAs for rat phosphoribosylpyrophosphate synthetase.</title>
        <authorList>
            <person name="Taira M."/>
            <person name="Ishijima S."/>
            <person name="Kita K."/>
            <person name="Yamada K."/>
            <person name="Iizasa T."/>
            <person name="Tatibana M."/>
        </authorList>
    </citation>
    <scope>NUCLEOTIDE SEQUENCE [MRNA]</scope>
    <source>
        <tissue>Liver</tissue>
    </source>
</reference>
<reference key="2">
    <citation type="journal article" date="1989" name="Nucleic Acids Res.">
        <title>Complete cDNA sequence of rat phosphoribosylpyrophosphate synthetase subunit II (PRS II).</title>
        <authorList>
            <person name="Ishijima S."/>
            <person name="Taira M."/>
            <person name="Tatibana M."/>
        </authorList>
    </citation>
    <scope>NUCLEOTIDE SEQUENCE [MRNA]</scope>
</reference>
<reference key="3">
    <citation type="submission" date="2006-11" db="UniProtKB">
        <authorList>
            <person name="Lubec G."/>
            <person name="Afjehi-Sadat L."/>
        </authorList>
    </citation>
    <scope>PROTEIN SEQUENCE OF 185-194</scope>
    <scope>IDENTIFICATION BY MASS SPECTROMETRY</scope>
    <source>
        <strain>Sprague-Dawley</strain>
        <tissue>Spinal cord</tissue>
    </source>
</reference>
<organism>
    <name type="scientific">Rattus norvegicus</name>
    <name type="common">Rat</name>
    <dbReference type="NCBI Taxonomy" id="10116"/>
    <lineage>
        <taxon>Eukaryota</taxon>
        <taxon>Metazoa</taxon>
        <taxon>Chordata</taxon>
        <taxon>Craniata</taxon>
        <taxon>Vertebrata</taxon>
        <taxon>Euteleostomi</taxon>
        <taxon>Mammalia</taxon>
        <taxon>Eutheria</taxon>
        <taxon>Euarchontoglires</taxon>
        <taxon>Glires</taxon>
        <taxon>Rodentia</taxon>
        <taxon>Myomorpha</taxon>
        <taxon>Muroidea</taxon>
        <taxon>Muridae</taxon>
        <taxon>Murinae</taxon>
        <taxon>Rattus</taxon>
    </lineage>
</organism>
<proteinExistence type="evidence at protein level"/>
<evidence type="ECO:0000250" key="1"/>
<evidence type="ECO:0000255" key="2"/>
<evidence type="ECO:0000305" key="3"/>
<comment type="function">
    <text>Catalyzes the synthesis of phosphoribosylpyrophosphate (PRPP) that is essential for nucleotide synthesis.</text>
</comment>
<comment type="catalytic activity">
    <reaction>
        <text>D-ribose 5-phosphate + ATP = 5-phospho-alpha-D-ribose 1-diphosphate + AMP + H(+)</text>
        <dbReference type="Rhea" id="RHEA:15609"/>
        <dbReference type="ChEBI" id="CHEBI:15378"/>
        <dbReference type="ChEBI" id="CHEBI:30616"/>
        <dbReference type="ChEBI" id="CHEBI:58017"/>
        <dbReference type="ChEBI" id="CHEBI:78346"/>
        <dbReference type="ChEBI" id="CHEBI:456215"/>
        <dbReference type="EC" id="2.7.6.1"/>
    </reaction>
</comment>
<comment type="cofactor">
    <cofactor>
        <name>Mg(2+)</name>
        <dbReference type="ChEBI" id="CHEBI:18420"/>
    </cofactor>
</comment>
<comment type="activity regulation">
    <text>Activated by magnesium and inorganic phosphate.</text>
</comment>
<comment type="pathway">
    <text>Metabolic intermediate biosynthesis; 5-phospho-alpha-D-ribose 1-diphosphate biosynthesis; 5-phospho-alpha-D-ribose 1-diphosphate from D-ribose 5-phosphate (route I): step 1/1.</text>
</comment>
<comment type="subunit">
    <text evidence="1">Homodimer. The active form is probably a hexamer composed of 3 homodimers (By similarity).</text>
</comment>
<comment type="similarity">
    <text evidence="3">Belongs to the ribose-phosphate pyrophosphokinase family.</text>
</comment>
<protein>
    <recommendedName>
        <fullName>Ribose-phosphate pyrophosphokinase 2</fullName>
        <ecNumber>2.7.6.1</ecNumber>
    </recommendedName>
    <alternativeName>
        <fullName>Phosphoribosyl pyrophosphate synthase II</fullName>
        <shortName>PRS-II</shortName>
    </alternativeName>
</protein>
<keyword id="KW-0067">ATP-binding</keyword>
<keyword id="KW-0903">Direct protein sequencing</keyword>
<keyword id="KW-0418">Kinase</keyword>
<keyword id="KW-0460">Magnesium</keyword>
<keyword id="KW-0479">Metal-binding</keyword>
<keyword id="KW-0545">Nucleotide biosynthesis</keyword>
<keyword id="KW-0547">Nucleotide-binding</keyword>
<keyword id="KW-1185">Reference proteome</keyword>
<keyword id="KW-0808">Transferase</keyword>